<feature type="chain" id="PRO_0000361557" description="Ubiquitin thioesterase zranb1-B">
    <location>
        <begin position="1"/>
        <end position="701"/>
    </location>
</feature>
<feature type="repeat" description="ANK 1">
    <location>
        <begin position="253"/>
        <end position="283"/>
    </location>
</feature>
<feature type="repeat" description="ANK 2">
    <location>
        <begin position="306"/>
        <end position="333"/>
    </location>
</feature>
<feature type="domain" description="OTU" evidence="3">
    <location>
        <begin position="425"/>
        <end position="585"/>
    </location>
</feature>
<feature type="zinc finger region" description="RanBP2-type 1" evidence="4">
    <location>
        <begin position="3"/>
        <end position="33"/>
    </location>
</feature>
<feature type="zinc finger region" description="RanBP2-type 2" evidence="4">
    <location>
        <begin position="79"/>
        <end position="108"/>
    </location>
</feature>
<feature type="zinc finger region" description="RanBP2-type 3" evidence="4">
    <location>
        <begin position="143"/>
        <end position="173"/>
    </location>
</feature>
<feature type="region of interest" description="Disordered" evidence="5">
    <location>
        <begin position="108"/>
        <end position="129"/>
    </location>
</feature>
<feature type="region of interest" description="Disordered" evidence="5">
    <location>
        <begin position="197"/>
        <end position="220"/>
    </location>
</feature>
<feature type="compositionally biased region" description="Polar residues" evidence="5">
    <location>
        <begin position="108"/>
        <end position="121"/>
    </location>
</feature>
<feature type="compositionally biased region" description="Polar residues" evidence="5">
    <location>
        <begin position="202"/>
        <end position="214"/>
    </location>
</feature>
<feature type="active site" description="Nucleophile" evidence="2">
    <location>
        <position position="436"/>
    </location>
</feature>
<feature type="active site" description="Proton acceptor" evidence="1">
    <location>
        <position position="578"/>
    </location>
</feature>
<feature type="binding site" evidence="4">
    <location>
        <position position="10"/>
    </location>
    <ligand>
        <name>Zn(2+)</name>
        <dbReference type="ChEBI" id="CHEBI:29105"/>
        <label>1</label>
    </ligand>
</feature>
<feature type="binding site" evidence="4">
    <location>
        <position position="13"/>
    </location>
    <ligand>
        <name>Zn(2+)</name>
        <dbReference type="ChEBI" id="CHEBI:29105"/>
        <label>1</label>
    </ligand>
</feature>
<feature type="binding site" evidence="4">
    <location>
        <position position="24"/>
    </location>
    <ligand>
        <name>Zn(2+)</name>
        <dbReference type="ChEBI" id="CHEBI:29105"/>
        <label>1</label>
    </ligand>
</feature>
<feature type="binding site" evidence="4">
    <location>
        <position position="27"/>
    </location>
    <ligand>
        <name>Zn(2+)</name>
        <dbReference type="ChEBI" id="CHEBI:29105"/>
        <label>1</label>
    </ligand>
</feature>
<feature type="binding site" evidence="4">
    <location>
        <position position="85"/>
    </location>
    <ligand>
        <name>Zn(2+)</name>
        <dbReference type="ChEBI" id="CHEBI:29105"/>
        <label>2</label>
    </ligand>
</feature>
<feature type="binding site" evidence="4">
    <location>
        <position position="88"/>
    </location>
    <ligand>
        <name>Zn(2+)</name>
        <dbReference type="ChEBI" id="CHEBI:29105"/>
        <label>2</label>
    </ligand>
</feature>
<feature type="binding site" evidence="4">
    <location>
        <position position="99"/>
    </location>
    <ligand>
        <name>Zn(2+)</name>
        <dbReference type="ChEBI" id="CHEBI:29105"/>
        <label>2</label>
    </ligand>
</feature>
<feature type="binding site" evidence="4">
    <location>
        <position position="102"/>
    </location>
    <ligand>
        <name>Zn(2+)</name>
        <dbReference type="ChEBI" id="CHEBI:29105"/>
        <label>2</label>
    </ligand>
</feature>
<feature type="binding site" evidence="4">
    <location>
        <position position="150"/>
    </location>
    <ligand>
        <name>Zn(2+)</name>
        <dbReference type="ChEBI" id="CHEBI:29105"/>
        <label>3</label>
    </ligand>
</feature>
<feature type="binding site" evidence="4">
    <location>
        <position position="153"/>
    </location>
    <ligand>
        <name>Zn(2+)</name>
        <dbReference type="ChEBI" id="CHEBI:29105"/>
        <label>3</label>
    </ligand>
</feature>
<feature type="binding site" evidence="4">
    <location>
        <position position="164"/>
    </location>
    <ligand>
        <name>Zn(2+)</name>
        <dbReference type="ChEBI" id="CHEBI:29105"/>
        <label>3</label>
    </ligand>
</feature>
<feature type="binding site" evidence="4">
    <location>
        <position position="167"/>
    </location>
    <ligand>
        <name>Zn(2+)</name>
        <dbReference type="ChEBI" id="CHEBI:29105"/>
        <label>3</label>
    </ligand>
</feature>
<evidence type="ECO:0000250" key="1">
    <source>
        <dbReference type="UniProtKB" id="Q6GQQ9"/>
    </source>
</evidence>
<evidence type="ECO:0000250" key="2">
    <source>
        <dbReference type="UniProtKB" id="Q9UGI0"/>
    </source>
</evidence>
<evidence type="ECO:0000255" key="3">
    <source>
        <dbReference type="PROSITE-ProRule" id="PRU00139"/>
    </source>
</evidence>
<evidence type="ECO:0000255" key="4">
    <source>
        <dbReference type="PROSITE-ProRule" id="PRU00322"/>
    </source>
</evidence>
<evidence type="ECO:0000256" key="5">
    <source>
        <dbReference type="SAM" id="MobiDB-lite"/>
    </source>
</evidence>
<evidence type="ECO:0000305" key="6"/>
<organism>
    <name type="scientific">Xenopus laevis</name>
    <name type="common">African clawed frog</name>
    <dbReference type="NCBI Taxonomy" id="8355"/>
    <lineage>
        <taxon>Eukaryota</taxon>
        <taxon>Metazoa</taxon>
        <taxon>Chordata</taxon>
        <taxon>Craniata</taxon>
        <taxon>Vertebrata</taxon>
        <taxon>Euteleostomi</taxon>
        <taxon>Amphibia</taxon>
        <taxon>Batrachia</taxon>
        <taxon>Anura</taxon>
        <taxon>Pipoidea</taxon>
        <taxon>Pipidae</taxon>
        <taxon>Xenopodinae</taxon>
        <taxon>Xenopus</taxon>
        <taxon>Xenopus</taxon>
    </lineage>
</organism>
<comment type="function">
    <text evidence="2">Ubiquitin thioesterase, which specifically hydrolyzes 'Lys-29'-linked and 'Lys-33'-linked diubiquitin (By similarity). Also cleaves 'Lys-63'-linked chains, but with 40-fold less efficiency compared to 'Lys-29'-linked ones (By similarity). Positive regulator of the Wnt signaling pathway that deubiquitinates apc protein, a negative regulator of Wnt-mediated transcription (By similarity). Acts as a regulator of autophagy by mediating deubiquitination of pik3c3/vps34, thereby promoting autophagosome maturation (By similarity). Plays a role in the regulation of cell morphology and cytoskeletal organization (By similarity). Required in the stress fiber dynamics and cell migration (By similarity).</text>
</comment>
<comment type="catalytic activity">
    <reaction evidence="2">
        <text>Thiol-dependent hydrolysis of ester, thioester, amide, peptide and isopeptide bonds formed by the C-terminal Gly of ubiquitin (a 76-residue protein attached to proteins as an intracellular targeting signal).</text>
        <dbReference type="EC" id="3.4.19.12"/>
    </reaction>
</comment>
<comment type="subcellular location">
    <subcellularLocation>
        <location evidence="2">Cytoplasm</location>
    </subcellularLocation>
    <subcellularLocation>
        <location evidence="2">Nucleus</location>
    </subcellularLocation>
    <text evidence="2">Enriched in punctate localization in the cytoplasm.</text>
</comment>
<comment type="domain">
    <text evidence="2">The RanBP2-type zinc fingers, also called NZFs, mediate the interaction with ubiquitin and determine linkage specificity. RanBP2-type zinc fingers 1 and 2 (also named NZF1 and NZF2) specifically recognize and bind 'Lys-29'- and 'Lys-33'-linked ubiquitin. RanBP2-type zinc finger 3 (also named NZF3) binds 'Lys-33'-linked ubiquitin and shows weak binding to 'Lys-6'-, 'Lys-48'- and 'Lys-63'-linked ubiquitin chains but it does not interact with 'Lys-29'-linked chains.</text>
</comment>
<comment type="domain">
    <text evidence="2">The OTU domain mediates the deubiquitinating activity.</text>
</comment>
<comment type="domain">
    <text evidence="2">The second ankyrin repeat ANK 2 is termed AnkUBD, it interacts with ubiquitin hydrophobic patch and contributes to linkage specificity.</text>
</comment>
<comment type="similarity">
    <text evidence="6">Belongs to the peptidase C64 family.</text>
</comment>
<proteinExistence type="evidence at transcript level"/>
<name>ZRN1B_XENLA</name>
<protein>
    <recommendedName>
        <fullName evidence="6">Ubiquitin thioesterase zranb1-B</fullName>
        <ecNumber evidence="2">3.4.19.12</ecNumber>
    </recommendedName>
    <alternativeName>
        <fullName>Zinc finger Ran-binding domain-containing protein 1B</fullName>
    </alternativeName>
</protein>
<gene>
    <name type="primary">zranb1-b</name>
</gene>
<accession>Q6NUB7</accession>
<keyword id="KW-0040">ANK repeat</keyword>
<keyword id="KW-0963">Cytoplasm</keyword>
<keyword id="KW-0378">Hydrolase</keyword>
<keyword id="KW-0479">Metal-binding</keyword>
<keyword id="KW-0539">Nucleus</keyword>
<keyword id="KW-0645">Protease</keyword>
<keyword id="KW-1185">Reference proteome</keyword>
<keyword id="KW-0677">Repeat</keyword>
<keyword id="KW-0788">Thiol protease</keyword>
<keyword id="KW-0833">Ubl conjugation pathway</keyword>
<keyword id="KW-0879">Wnt signaling pathway</keyword>
<keyword id="KW-0862">Zinc</keyword>
<keyword id="KW-0863">Zinc-finger</keyword>
<sequence>MTEDGIKWACEYCTFENWPSAIKCTMCRAPRPSGAIITEEPFKNRTPDVGSMEREIGSPLICPDSSARPRVKSSYSMETSSKWSCQICTYLNWPRAIRCTQCLSQRRTRSPTESPQSSGSGLRSIPGPIDPCEEYNDRNKLNIKGQHWTCSACTYENCAKAKKCVVCDHPTPNNMDAIELANTDEASSIINEQDRARWRGGCSSSNSQRRSPPTSKRDSDMDFQRIELAGAVGSKEEFELDLKKLKQIKNRMRKTDWLFLNACVGVVEGDLSAVEAYKTSGGDIARQLSADEVRLLNRPSAFDVGYTLVHLSIRFQRQDMLAILLTEVAQHAAKCIPAMVCPELTEQIRREIAASVHQRKGDFACYFLTDLVTFTLPADIEDLPPTVQEKLFDEVLDRDVQKELEEESPIINWSLELGTRLDSRLYALWNRTAGDCLLDSVLQATWGIYDKDSVLRKALHDSLRDCSHWFYSRWKEWESWYSQSFGLHFSLREEQWQEDWAFILSLASQPGASLEQTHIFVLAHILRRPIIVYGVKYYKSFRGETLGYTRFQGVYLPLLWEQSFCWKSPIALGYTRGHFSALVAMENDGFDNRGAGANLNTDDDVTVTFLPLVDSERKLLHVHFLSAQELGNEDQQEKLLREWMDCCVTEGGVLVAMQKSSRRRNHPLVTQMVEKWLDGYRQIRPCTALSDGEEDEDDEDE</sequence>
<reference key="1">
    <citation type="submission" date="2004-04" db="EMBL/GenBank/DDBJ databases">
        <authorList>
            <consortium name="NIH - Xenopus Gene Collection (XGC) project"/>
        </authorList>
    </citation>
    <scope>NUCLEOTIDE SEQUENCE [LARGE SCALE MRNA]</scope>
    <source>
        <tissue>Ovary</tissue>
    </source>
</reference>
<dbReference type="EC" id="3.4.19.12" evidence="2"/>
<dbReference type="EMBL" id="BC068679">
    <property type="protein sequence ID" value="AAH68679.1"/>
    <property type="molecule type" value="mRNA"/>
</dbReference>
<dbReference type="RefSeq" id="NP_001084698.1">
    <property type="nucleotide sequence ID" value="NM_001091229.1"/>
</dbReference>
<dbReference type="SMR" id="Q6NUB7"/>
<dbReference type="MEROPS" id="C64.004"/>
<dbReference type="DNASU" id="414659"/>
<dbReference type="GeneID" id="414659"/>
<dbReference type="KEGG" id="xla:414659"/>
<dbReference type="AGR" id="Xenbase:XB-GENE-6252281"/>
<dbReference type="CTD" id="414659"/>
<dbReference type="Xenbase" id="XB-GENE-6252281">
    <property type="gene designation" value="zranb1.S"/>
</dbReference>
<dbReference type="OrthoDB" id="6275030at2759"/>
<dbReference type="Proteomes" id="UP000186698">
    <property type="component" value="Chromosome 7S"/>
</dbReference>
<dbReference type="Bgee" id="414659">
    <property type="expression patterns" value="Expressed in muscle tissue and 19 other cell types or tissues"/>
</dbReference>
<dbReference type="GO" id="GO:0005737">
    <property type="term" value="C:cytoplasm"/>
    <property type="evidence" value="ECO:0000250"/>
    <property type="project" value="UniProtKB"/>
</dbReference>
<dbReference type="GO" id="GO:0005634">
    <property type="term" value="C:nucleus"/>
    <property type="evidence" value="ECO:0000250"/>
    <property type="project" value="UniProtKB"/>
</dbReference>
<dbReference type="GO" id="GO:0004843">
    <property type="term" value="F:cysteine-type deubiquitinase activity"/>
    <property type="evidence" value="ECO:0000250"/>
    <property type="project" value="UniProtKB"/>
</dbReference>
<dbReference type="GO" id="GO:0070530">
    <property type="term" value="F:K63-linked polyubiquitin modification-dependent protein binding"/>
    <property type="evidence" value="ECO:0000318"/>
    <property type="project" value="GO_Central"/>
</dbReference>
<dbReference type="GO" id="GO:0008270">
    <property type="term" value="F:zinc ion binding"/>
    <property type="evidence" value="ECO:0007669"/>
    <property type="project" value="UniProtKB-KW"/>
</dbReference>
<dbReference type="GO" id="GO:0016477">
    <property type="term" value="P:cell migration"/>
    <property type="evidence" value="ECO:0000250"/>
    <property type="project" value="UniProtKB"/>
</dbReference>
<dbReference type="GO" id="GO:0007010">
    <property type="term" value="P:cytoskeleton organization"/>
    <property type="evidence" value="ECO:0000250"/>
    <property type="project" value="UniProtKB"/>
</dbReference>
<dbReference type="GO" id="GO:0030177">
    <property type="term" value="P:positive regulation of Wnt signaling pathway"/>
    <property type="evidence" value="ECO:0000250"/>
    <property type="project" value="UniProtKB"/>
</dbReference>
<dbReference type="GO" id="GO:0071947">
    <property type="term" value="P:protein deubiquitination involved in ubiquitin-dependent protein catabolic process"/>
    <property type="evidence" value="ECO:0000318"/>
    <property type="project" value="GO_Central"/>
</dbReference>
<dbReference type="GO" id="GO:0035523">
    <property type="term" value="P:protein K29-linked deubiquitination"/>
    <property type="evidence" value="ECO:0000250"/>
    <property type="project" value="UniProtKB"/>
</dbReference>
<dbReference type="GO" id="GO:1990168">
    <property type="term" value="P:protein K33-linked deubiquitination"/>
    <property type="evidence" value="ECO:0000250"/>
    <property type="project" value="UniProtKB"/>
</dbReference>
<dbReference type="GO" id="GO:0070536">
    <property type="term" value="P:protein K63-linked deubiquitination"/>
    <property type="evidence" value="ECO:0000250"/>
    <property type="project" value="UniProtKB"/>
</dbReference>
<dbReference type="GO" id="GO:0022604">
    <property type="term" value="P:regulation of cell morphogenesis"/>
    <property type="evidence" value="ECO:0000250"/>
    <property type="project" value="UniProtKB"/>
</dbReference>
<dbReference type="GO" id="GO:0016055">
    <property type="term" value="P:Wnt signaling pathway"/>
    <property type="evidence" value="ECO:0007669"/>
    <property type="project" value="UniProtKB-KW"/>
</dbReference>
<dbReference type="CDD" id="cd22767">
    <property type="entry name" value="OTU_ZRANB1"/>
    <property type="match status" value="1"/>
</dbReference>
<dbReference type="FunFam" id="1.25.40.560:FF:000001">
    <property type="entry name" value="ubiquitin thioesterase ZRANB1 isoform X1"/>
    <property type="match status" value="1"/>
</dbReference>
<dbReference type="FunFam" id="4.10.1060.10:FF:000006">
    <property type="entry name" value="ubiquitin thioesterase ZRANB1 isoform X1"/>
    <property type="match status" value="1"/>
</dbReference>
<dbReference type="FunFam" id="4.10.1060.10:FF:000011">
    <property type="entry name" value="ubiquitin thioesterase ZRANB1 isoform X1"/>
    <property type="match status" value="1"/>
</dbReference>
<dbReference type="FunFam" id="4.10.1060.10:FF:000012">
    <property type="entry name" value="ubiquitin thioesterase ZRANB1 isoform X1"/>
    <property type="match status" value="1"/>
</dbReference>
<dbReference type="Gene3D" id="1.25.40.560">
    <property type="match status" value="1"/>
</dbReference>
<dbReference type="Gene3D" id="4.10.1060.10">
    <property type="entry name" value="Zinc finger, RanBP2-type"/>
    <property type="match status" value="3"/>
</dbReference>
<dbReference type="InterPro" id="IPR041294">
    <property type="entry name" value="AnkUBD"/>
</dbReference>
<dbReference type="InterPro" id="IPR051346">
    <property type="entry name" value="OTU_Deubiquitinase"/>
</dbReference>
<dbReference type="InterPro" id="IPR003323">
    <property type="entry name" value="OTU_dom"/>
</dbReference>
<dbReference type="InterPro" id="IPR001876">
    <property type="entry name" value="Znf_RanBP2"/>
</dbReference>
<dbReference type="InterPro" id="IPR036443">
    <property type="entry name" value="Znf_RanBP2_sf"/>
</dbReference>
<dbReference type="InterPro" id="IPR049768">
    <property type="entry name" value="ZRANB1_OTU"/>
</dbReference>
<dbReference type="PANTHER" id="PTHR13367">
    <property type="entry name" value="UBIQUITIN THIOESTERASE"/>
    <property type="match status" value="1"/>
</dbReference>
<dbReference type="PANTHER" id="PTHR13367:SF28">
    <property type="entry name" value="UBIQUITIN THIOESTERASE ZRANB1"/>
    <property type="match status" value="1"/>
</dbReference>
<dbReference type="Pfam" id="PF18418">
    <property type="entry name" value="AnkUBD"/>
    <property type="match status" value="1"/>
</dbReference>
<dbReference type="Pfam" id="PF02338">
    <property type="entry name" value="OTU"/>
    <property type="match status" value="1"/>
</dbReference>
<dbReference type="Pfam" id="PF00641">
    <property type="entry name" value="Zn_ribbon_RanBP"/>
    <property type="match status" value="2"/>
</dbReference>
<dbReference type="SMART" id="SM00547">
    <property type="entry name" value="ZnF_RBZ"/>
    <property type="match status" value="3"/>
</dbReference>
<dbReference type="SUPFAM" id="SSF90209">
    <property type="entry name" value="Ran binding protein zinc finger-like"/>
    <property type="match status" value="2"/>
</dbReference>
<dbReference type="PROSITE" id="PS50802">
    <property type="entry name" value="OTU"/>
    <property type="match status" value="1"/>
</dbReference>
<dbReference type="PROSITE" id="PS01358">
    <property type="entry name" value="ZF_RANBP2_1"/>
    <property type="match status" value="3"/>
</dbReference>
<dbReference type="PROSITE" id="PS50199">
    <property type="entry name" value="ZF_RANBP2_2"/>
    <property type="match status" value="3"/>
</dbReference>